<dbReference type="EMBL" id="AP003840">
    <property type="protein sequence ID" value="BAC15510.1"/>
    <property type="molecule type" value="Genomic_DNA"/>
</dbReference>
<dbReference type="EMBL" id="AP008213">
    <property type="protein sequence ID" value="BAF22111.1"/>
    <property type="molecule type" value="Genomic_DNA"/>
</dbReference>
<dbReference type="EMBL" id="AP014963">
    <property type="protein sequence ID" value="BAT02519.1"/>
    <property type="molecule type" value="Genomic_DNA"/>
</dbReference>
<dbReference type="EMBL" id="CM000144">
    <property type="protein sequence ID" value="EEE67534.1"/>
    <property type="molecule type" value="Genomic_DNA"/>
</dbReference>
<dbReference type="RefSeq" id="XP_015647915.1">
    <property type="nucleotide sequence ID" value="XM_015792429.1"/>
</dbReference>
<dbReference type="SMR" id="Q8H594"/>
<dbReference type="FunCoup" id="Q8H594">
    <property type="interactions" value="1696"/>
</dbReference>
<dbReference type="STRING" id="39947.Q8H594"/>
<dbReference type="PaxDb" id="39947-Q8H594"/>
<dbReference type="EnsemblPlants" id="Os07t0600400-01">
    <property type="protein sequence ID" value="Os07t0600400-01"/>
    <property type="gene ID" value="Os07g0600400"/>
</dbReference>
<dbReference type="GeneID" id="4343819"/>
<dbReference type="Gramene" id="Os07t0600400-01">
    <property type="protein sequence ID" value="Os07t0600400-01"/>
    <property type="gene ID" value="Os07g0600400"/>
</dbReference>
<dbReference type="KEGG" id="dosa:Os07g0600400"/>
<dbReference type="KEGG" id="osa:4343819"/>
<dbReference type="eggNOG" id="KOG0313">
    <property type="taxonomic scope" value="Eukaryota"/>
</dbReference>
<dbReference type="HOGENOM" id="CLU_000288_57_0_1"/>
<dbReference type="InParanoid" id="Q8H594"/>
<dbReference type="OMA" id="DHKYVEF"/>
<dbReference type="OrthoDB" id="10251381at2759"/>
<dbReference type="Proteomes" id="UP000000763">
    <property type="component" value="Chromosome 7"/>
</dbReference>
<dbReference type="Proteomes" id="UP000007752">
    <property type="component" value="Chromosome 7"/>
</dbReference>
<dbReference type="Proteomes" id="UP000059680">
    <property type="component" value="Chromosome 7"/>
</dbReference>
<dbReference type="GO" id="GO:0005730">
    <property type="term" value="C:nucleolus"/>
    <property type="evidence" value="ECO:0007669"/>
    <property type="project" value="UniProtKB-SubCell"/>
</dbReference>
<dbReference type="GO" id="GO:0005654">
    <property type="term" value="C:nucleoplasm"/>
    <property type="evidence" value="ECO:0007669"/>
    <property type="project" value="UniProtKB-SubCell"/>
</dbReference>
<dbReference type="GO" id="GO:0030687">
    <property type="term" value="C:preribosome, large subunit precursor"/>
    <property type="evidence" value="ECO:0007669"/>
    <property type="project" value="UniProtKB-UniRule"/>
</dbReference>
<dbReference type="GO" id="GO:0043021">
    <property type="term" value="F:ribonucleoprotein complex binding"/>
    <property type="evidence" value="ECO:0007669"/>
    <property type="project" value="UniProtKB-UniRule"/>
</dbReference>
<dbReference type="GO" id="GO:0000466">
    <property type="term" value="P:maturation of 5.8S rRNA from tricistronic rRNA transcript (SSU-rRNA, 5.8S rRNA, LSU-rRNA)"/>
    <property type="evidence" value="ECO:0007669"/>
    <property type="project" value="UniProtKB-UniRule"/>
</dbReference>
<dbReference type="GO" id="GO:0000463">
    <property type="term" value="P:maturation of LSU-rRNA from tricistronic rRNA transcript (SSU-rRNA, 5.8S rRNA, LSU-rRNA)"/>
    <property type="evidence" value="ECO:0007669"/>
    <property type="project" value="UniProtKB-UniRule"/>
</dbReference>
<dbReference type="CDD" id="cd00200">
    <property type="entry name" value="WD40"/>
    <property type="match status" value="1"/>
</dbReference>
<dbReference type="FunFam" id="2.130.10.10:FF:000399">
    <property type="entry name" value="Ribosome biogenesis protein WDR12 homolog"/>
    <property type="match status" value="1"/>
</dbReference>
<dbReference type="Gene3D" id="2.130.10.10">
    <property type="entry name" value="YVTN repeat-like/Quinoprotein amine dehydrogenase"/>
    <property type="match status" value="1"/>
</dbReference>
<dbReference type="HAMAP" id="MF_03029">
    <property type="entry name" value="WDR12"/>
    <property type="match status" value="1"/>
</dbReference>
<dbReference type="InterPro" id="IPR020472">
    <property type="entry name" value="G-protein_beta_WD-40_rep"/>
</dbReference>
<dbReference type="InterPro" id="IPR012972">
    <property type="entry name" value="NLE"/>
</dbReference>
<dbReference type="InterPro" id="IPR015943">
    <property type="entry name" value="WD40/YVTN_repeat-like_dom_sf"/>
</dbReference>
<dbReference type="InterPro" id="IPR019775">
    <property type="entry name" value="WD40_repeat_CS"/>
</dbReference>
<dbReference type="InterPro" id="IPR036322">
    <property type="entry name" value="WD40_repeat_dom_sf"/>
</dbReference>
<dbReference type="InterPro" id="IPR001680">
    <property type="entry name" value="WD40_rpt"/>
</dbReference>
<dbReference type="InterPro" id="IPR028599">
    <property type="entry name" value="WDR12/Ytm1"/>
</dbReference>
<dbReference type="PANTHER" id="PTHR19855:SF11">
    <property type="entry name" value="RIBOSOME BIOGENESIS PROTEIN WDR12"/>
    <property type="match status" value="1"/>
</dbReference>
<dbReference type="PANTHER" id="PTHR19855">
    <property type="entry name" value="WD40 REPEAT PROTEIN 12, 37"/>
    <property type="match status" value="1"/>
</dbReference>
<dbReference type="Pfam" id="PF08154">
    <property type="entry name" value="NLE"/>
    <property type="match status" value="1"/>
</dbReference>
<dbReference type="Pfam" id="PF00400">
    <property type="entry name" value="WD40"/>
    <property type="match status" value="5"/>
</dbReference>
<dbReference type="PRINTS" id="PR00320">
    <property type="entry name" value="GPROTEINBRPT"/>
</dbReference>
<dbReference type="SMART" id="SM00320">
    <property type="entry name" value="WD40"/>
    <property type="match status" value="7"/>
</dbReference>
<dbReference type="SUPFAM" id="SSF50978">
    <property type="entry name" value="WD40 repeat-like"/>
    <property type="match status" value="1"/>
</dbReference>
<dbReference type="PROSITE" id="PS00678">
    <property type="entry name" value="WD_REPEATS_1"/>
    <property type="match status" value="1"/>
</dbReference>
<dbReference type="PROSITE" id="PS50082">
    <property type="entry name" value="WD_REPEATS_2"/>
    <property type="match status" value="3"/>
</dbReference>
<dbReference type="PROSITE" id="PS50294">
    <property type="entry name" value="WD_REPEATS_REGION"/>
    <property type="match status" value="1"/>
</dbReference>
<feature type="chain" id="PRO_0000437497" description="Ribosome biogenesis protein WDR12 homolog">
    <location>
        <begin position="1"/>
        <end position="436"/>
    </location>
</feature>
<feature type="repeat" description="WD 1" evidence="1">
    <location>
        <begin position="109"/>
        <end position="147"/>
    </location>
</feature>
<feature type="repeat" description="WD 2" evidence="1">
    <location>
        <begin position="149"/>
        <end position="193"/>
    </location>
</feature>
<feature type="repeat" description="WD 3" evidence="1">
    <location>
        <begin position="203"/>
        <end position="242"/>
    </location>
</feature>
<feature type="repeat" description="WD 4" evidence="1">
    <location>
        <begin position="273"/>
        <end position="311"/>
    </location>
</feature>
<feature type="repeat" description="WD 5" evidence="1">
    <location>
        <begin position="313"/>
        <end position="353"/>
    </location>
</feature>
<feature type="repeat" description="WD 6" evidence="1">
    <location>
        <begin position="359"/>
        <end position="399"/>
    </location>
</feature>
<feature type="repeat" description="WD 7" evidence="1">
    <location>
        <begin position="402"/>
        <end position="436"/>
    </location>
</feature>
<feature type="region of interest" description="Ubiquitin-like (UBL) domain" evidence="1">
    <location>
        <begin position="13"/>
        <end position="97"/>
    </location>
</feature>
<feature type="region of interest" description="Disordered" evidence="2">
    <location>
        <begin position="240"/>
        <end position="262"/>
    </location>
</feature>
<reference key="1">
    <citation type="journal article" date="2005" name="Nature">
        <title>The map-based sequence of the rice genome.</title>
        <authorList>
            <consortium name="International rice genome sequencing project (IRGSP)"/>
        </authorList>
    </citation>
    <scope>NUCLEOTIDE SEQUENCE [LARGE SCALE GENOMIC DNA]</scope>
    <source>
        <strain>cv. Nipponbare</strain>
    </source>
</reference>
<reference key="2">
    <citation type="journal article" date="2008" name="Nucleic Acids Res.">
        <title>The rice annotation project database (RAP-DB): 2008 update.</title>
        <authorList>
            <consortium name="The rice annotation project (RAP)"/>
        </authorList>
    </citation>
    <scope>GENOME REANNOTATION</scope>
    <source>
        <strain>cv. Nipponbare</strain>
    </source>
</reference>
<reference key="3">
    <citation type="journal article" date="2013" name="Rice">
        <title>Improvement of the Oryza sativa Nipponbare reference genome using next generation sequence and optical map data.</title>
        <authorList>
            <person name="Kawahara Y."/>
            <person name="de la Bastide M."/>
            <person name="Hamilton J.P."/>
            <person name="Kanamori H."/>
            <person name="McCombie W.R."/>
            <person name="Ouyang S."/>
            <person name="Schwartz D.C."/>
            <person name="Tanaka T."/>
            <person name="Wu J."/>
            <person name="Zhou S."/>
            <person name="Childs K.L."/>
            <person name="Davidson R.M."/>
            <person name="Lin H."/>
            <person name="Quesada-Ocampo L."/>
            <person name="Vaillancourt B."/>
            <person name="Sakai H."/>
            <person name="Lee S.S."/>
            <person name="Kim J."/>
            <person name="Numa H."/>
            <person name="Itoh T."/>
            <person name="Buell C.R."/>
            <person name="Matsumoto T."/>
        </authorList>
    </citation>
    <scope>GENOME REANNOTATION</scope>
    <source>
        <strain>cv. Nipponbare</strain>
    </source>
</reference>
<reference key="4">
    <citation type="journal article" date="2005" name="PLoS Biol.">
        <title>The genomes of Oryza sativa: a history of duplications.</title>
        <authorList>
            <person name="Yu J."/>
            <person name="Wang J."/>
            <person name="Lin W."/>
            <person name="Li S."/>
            <person name="Li H."/>
            <person name="Zhou J."/>
            <person name="Ni P."/>
            <person name="Dong W."/>
            <person name="Hu S."/>
            <person name="Zeng C."/>
            <person name="Zhang J."/>
            <person name="Zhang Y."/>
            <person name="Li R."/>
            <person name="Xu Z."/>
            <person name="Li S."/>
            <person name="Li X."/>
            <person name="Zheng H."/>
            <person name="Cong L."/>
            <person name="Lin L."/>
            <person name="Yin J."/>
            <person name="Geng J."/>
            <person name="Li G."/>
            <person name="Shi J."/>
            <person name="Liu J."/>
            <person name="Lv H."/>
            <person name="Li J."/>
            <person name="Wang J."/>
            <person name="Deng Y."/>
            <person name="Ran L."/>
            <person name="Shi X."/>
            <person name="Wang X."/>
            <person name="Wu Q."/>
            <person name="Li C."/>
            <person name="Ren X."/>
            <person name="Wang J."/>
            <person name="Wang X."/>
            <person name="Li D."/>
            <person name="Liu D."/>
            <person name="Zhang X."/>
            <person name="Ji Z."/>
            <person name="Zhao W."/>
            <person name="Sun Y."/>
            <person name="Zhang Z."/>
            <person name="Bao J."/>
            <person name="Han Y."/>
            <person name="Dong L."/>
            <person name="Ji J."/>
            <person name="Chen P."/>
            <person name="Wu S."/>
            <person name="Liu J."/>
            <person name="Xiao Y."/>
            <person name="Bu D."/>
            <person name="Tan J."/>
            <person name="Yang L."/>
            <person name="Ye C."/>
            <person name="Zhang J."/>
            <person name="Xu J."/>
            <person name="Zhou Y."/>
            <person name="Yu Y."/>
            <person name="Zhang B."/>
            <person name="Zhuang S."/>
            <person name="Wei H."/>
            <person name="Liu B."/>
            <person name="Lei M."/>
            <person name="Yu H."/>
            <person name="Li Y."/>
            <person name="Xu H."/>
            <person name="Wei S."/>
            <person name="He X."/>
            <person name="Fang L."/>
            <person name="Zhang Z."/>
            <person name="Zhang Y."/>
            <person name="Huang X."/>
            <person name="Su Z."/>
            <person name="Tong W."/>
            <person name="Li J."/>
            <person name="Tong Z."/>
            <person name="Li S."/>
            <person name="Ye J."/>
            <person name="Wang L."/>
            <person name="Fang L."/>
            <person name="Lei T."/>
            <person name="Chen C.-S."/>
            <person name="Chen H.-C."/>
            <person name="Xu Z."/>
            <person name="Li H."/>
            <person name="Huang H."/>
            <person name="Zhang F."/>
            <person name="Xu H."/>
            <person name="Li N."/>
            <person name="Zhao C."/>
            <person name="Li S."/>
            <person name="Dong L."/>
            <person name="Huang Y."/>
            <person name="Li L."/>
            <person name="Xi Y."/>
            <person name="Qi Q."/>
            <person name="Li W."/>
            <person name="Zhang B."/>
            <person name="Hu W."/>
            <person name="Zhang Y."/>
            <person name="Tian X."/>
            <person name="Jiao Y."/>
            <person name="Liang X."/>
            <person name="Jin J."/>
            <person name="Gao L."/>
            <person name="Zheng W."/>
            <person name="Hao B."/>
            <person name="Liu S.-M."/>
            <person name="Wang W."/>
            <person name="Yuan L."/>
            <person name="Cao M."/>
            <person name="McDermott J."/>
            <person name="Samudrala R."/>
            <person name="Wang J."/>
            <person name="Wong G.K.-S."/>
            <person name="Yang H."/>
        </authorList>
    </citation>
    <scope>NUCLEOTIDE SEQUENCE [LARGE SCALE GENOMIC DNA]</scope>
    <source>
        <strain>cv. Nipponbare</strain>
    </source>
</reference>
<keyword id="KW-0539">Nucleus</keyword>
<keyword id="KW-1185">Reference proteome</keyword>
<keyword id="KW-0677">Repeat</keyword>
<keyword id="KW-0690">Ribosome biogenesis</keyword>
<keyword id="KW-0698">rRNA processing</keyword>
<keyword id="KW-0853">WD repeat</keyword>
<protein>
    <recommendedName>
        <fullName evidence="1">Ribosome biogenesis protein WDR12 homolog</fullName>
    </recommendedName>
</protein>
<evidence type="ECO:0000255" key="1">
    <source>
        <dbReference type="HAMAP-Rule" id="MF_03029"/>
    </source>
</evidence>
<evidence type="ECO:0000256" key="2">
    <source>
        <dbReference type="SAM" id="MobiDB-lite"/>
    </source>
</evidence>
<evidence type="ECO:0000305" key="3"/>
<evidence type="ECO:0000312" key="4">
    <source>
        <dbReference type="EMBL" id="BAC15510.1"/>
    </source>
</evidence>
<evidence type="ECO:0000312" key="5">
    <source>
        <dbReference type="EMBL" id="BAT02519.1"/>
    </source>
</evidence>
<evidence type="ECO:0000312" key="6">
    <source>
        <dbReference type="EMBL" id="EEE67534.1"/>
    </source>
</evidence>
<accession>Q8H594</accession>
<name>WDR12_ORYSJ</name>
<organism evidence="4">
    <name type="scientific">Oryza sativa subsp. japonica</name>
    <name type="common">Rice</name>
    <dbReference type="NCBI Taxonomy" id="39947"/>
    <lineage>
        <taxon>Eukaryota</taxon>
        <taxon>Viridiplantae</taxon>
        <taxon>Streptophyta</taxon>
        <taxon>Embryophyta</taxon>
        <taxon>Tracheophyta</taxon>
        <taxon>Spermatophyta</taxon>
        <taxon>Magnoliopsida</taxon>
        <taxon>Liliopsida</taxon>
        <taxon>Poales</taxon>
        <taxon>Poaceae</taxon>
        <taxon>BOP clade</taxon>
        <taxon>Oryzoideae</taxon>
        <taxon>Oryzeae</taxon>
        <taxon>Oryzinae</taxon>
        <taxon>Oryza</taxon>
        <taxon>Oryza sativa</taxon>
    </lineage>
</organism>
<comment type="function">
    <text evidence="1">Required for maturation of ribosomal RNAs and formation of the large ribosomal subunit.</text>
</comment>
<comment type="subcellular location">
    <subcellularLocation>
        <location evidence="1">Nucleus</location>
        <location evidence="1">Nucleolus</location>
    </subcellularLocation>
    <subcellularLocation>
        <location evidence="1">Nucleus</location>
        <location evidence="1">Nucleoplasm</location>
    </subcellularLocation>
</comment>
<comment type="similarity">
    <text evidence="1">Belongs to the WD repeat WDR12/YTM1 family.</text>
</comment>
<sequence>MDSGGASDPSRQVRVRFLTKLPAPLRAPPTSIAVPADLTRMGLSEIVNSLLLAASPDHQAQPFDFLVDGELVRLPLQEFLLAKGISVERVLELEYVKAVAPRKQEDPCPHDDWVSAVDGSNPSFVLTGCYDGLARIWRDASECTHILEGHSDGITSARFINKGETEDRLHVVTASKDRSLRLFKFDTSVSVPKQIGAYKILRGHTSSVQSVAVDPSTNMICSGSWDNSIKLWSVEGSEEDGDTVSVKKRRTNSDSSGPEESLFEGSATSTFLGHTQCVSAVTWPERQTIYSASWDHSVRQWDVQTGKETWNMVSGKALNCLDCGGESSSLIAAGGSDPVLRVWDPRKPGTLAPIFQFSSHKSWISACKWHPSSWFHLVSSSFDGKVMLWDLRTAWPLASVESHKDKVLCADWWKGDSVISGGADSKLCIASGIEIV</sequence>
<proteinExistence type="inferred from homology"/>
<gene>
    <name evidence="3" type="primary">WDR12</name>
    <name evidence="5" type="ordered locus">Os07g0600400</name>
    <name evidence="3" type="ordered locus">LOC_Os07g40930</name>
    <name evidence="4" type="ORF">OJ1634_B10.122</name>
    <name evidence="6" type="ORF">OsJ_25010</name>
</gene>